<gene>
    <name type="ORF">5a</name>
</gene>
<protein>
    <recommendedName>
        <fullName>Non-structural protein of 12.7 kDa</fullName>
        <shortName>ns12.7</shortName>
    </recommendedName>
    <alternativeName>
        <fullName>12.7 kDa accessory protein</fullName>
    </alternativeName>
</protein>
<proteinExistence type="inferred from homology"/>
<reference key="1">
    <citation type="journal article" date="1997" name="Virology">
        <title>Altered pathogenesis of a mutant of the murine coronavirus MHV-A59 is associated with a Q159L amino acid substitution in the spike protein.</title>
        <authorList>
            <person name="Leparc-Goffart I."/>
            <person name="Hingley S.T."/>
            <person name="Chua M.M."/>
            <person name="Jiang X."/>
            <person name="Lavi E."/>
            <person name="Weiss S.R."/>
        </authorList>
    </citation>
    <scope>NUCLEOTIDE SEQUENCE [GENOMIC RNA]</scope>
    <source>
        <strain>Isolate C12 mutant</strain>
    </source>
</reference>
<name>NS12_CVMA5</name>
<accession>P0C5A7</accession>
<evidence type="ECO:0000305" key="1"/>
<organismHost>
    <name type="scientific">Mus musculus</name>
    <name type="common">Mouse</name>
    <dbReference type="NCBI Taxonomy" id="10090"/>
</organismHost>
<keyword id="KW-1185">Reference proteome</keyword>
<sequence length="112" mass="13129">MRPTATWIWHVSDAWLRRTRDFGVIRLEDFCFQFNYSQPRVGYCRVPLKAWCSNQGKFAAQFTLKSCEKPGHEKFITSFTAYGRTVQQAVSKLVEEAVDFILFRATQLERNV</sequence>
<feature type="chain" id="PRO_0000296314" description="Non-structural protein of 12.7 kDa">
    <location>
        <begin position="1"/>
        <end position="112"/>
    </location>
</feature>
<organism>
    <name type="scientific">Murine coronavirus (strain A59)</name>
    <name type="common">MHV-A59</name>
    <name type="synonym">Murine hepatitis virus</name>
    <dbReference type="NCBI Taxonomy" id="11142"/>
    <lineage>
        <taxon>Viruses</taxon>
        <taxon>Riboviria</taxon>
        <taxon>Orthornavirae</taxon>
        <taxon>Pisuviricota</taxon>
        <taxon>Pisoniviricetes</taxon>
        <taxon>Nidovirales</taxon>
        <taxon>Cornidovirineae</taxon>
        <taxon>Coronaviridae</taxon>
        <taxon>Orthocoronavirinae</taxon>
        <taxon>Betacoronavirus</taxon>
        <taxon>Embecovirus</taxon>
        <taxon>Murine coronavirus</taxon>
    </lineage>
</organism>
<dbReference type="EMBL" id="AF029248">
    <property type="status" value="NOT_ANNOTATED_CDS"/>
    <property type="molecule type" value="Genomic_RNA"/>
</dbReference>
<dbReference type="TCDB" id="1.A.49.1.2">
    <property type="family name" value="the human coronavirus ns12,9 viroporin (ns12,9) family"/>
</dbReference>
<dbReference type="Proteomes" id="UP000007192">
    <property type="component" value="Segment"/>
</dbReference>
<dbReference type="InterPro" id="IPR006841">
    <property type="entry name" value="Corona_NS2"/>
</dbReference>
<dbReference type="Pfam" id="PF04753">
    <property type="entry name" value="Corona_NS12-7"/>
    <property type="match status" value="1"/>
</dbReference>
<comment type="similarity">
    <text evidence="1">Belongs to the coronaviruses 12.7 kDa protein family.</text>
</comment>